<keyword id="KW-0963">Cytoplasm</keyword>
<keyword id="KW-0312">Gluconeogenesis</keyword>
<keyword id="KW-0324">Glycolysis</keyword>
<keyword id="KW-0413">Isomerase</keyword>
<proteinExistence type="inferred from homology"/>
<organism>
    <name type="scientific">Pseudomonas putida (strain GB-1)</name>
    <dbReference type="NCBI Taxonomy" id="76869"/>
    <lineage>
        <taxon>Bacteria</taxon>
        <taxon>Pseudomonadati</taxon>
        <taxon>Pseudomonadota</taxon>
        <taxon>Gammaproteobacteria</taxon>
        <taxon>Pseudomonadales</taxon>
        <taxon>Pseudomonadaceae</taxon>
        <taxon>Pseudomonas</taxon>
    </lineage>
</organism>
<sequence>MAYYRTPHDVTALPAWQALQQHRDAMQGFSMREAFAADAQRFDQFSLSCCGLFLDYSKNLITEQSRDLLVNLANEVGLQDAIKSMFAGEIINASEGRPVLHTALRRPVGDKLSVNGVNVMPEVHKVLNQITELVGRIHDGLWRGYSEKPITDVVNIGIGGSFLGPELVSEALLPYAQRGVRCHYLANIDGSEFHELSANLRAETTLFIVSSKSFNTLETLKNAMAARTWYLAQGGSEAELYRHFIAVSSNKAAAVAFGIREENIFPMWDWVGGRYSLWSAIGLPIALAIGTANFKELLSGAYTMDQHFQTAPFDKNMPVLLALLGVWYGNFWGANSHAILPYDHYLRNITKHLQQLDMESNGKSVLQDGTPVKTDTGPVIWGGVGCNGQHAYHQLLHQGTQLIPADFIVPVVSFNPVADHHQWLYANCLSQSQALMLGKTREEAEAELRGKGLNEADIEKLAPHKVIPGNRPSNTLVVERISPRRLGALVAMYEHKVFVQSVIWGINAFDQWGVELGKELGKGVYQRLVGSLEESAEDGSTQGLINYFRGRHRG</sequence>
<reference key="1">
    <citation type="submission" date="2008-01" db="EMBL/GenBank/DDBJ databases">
        <title>Complete sequence of Pseudomonas putida GB-1.</title>
        <authorList>
            <consortium name="US DOE Joint Genome Institute"/>
            <person name="Copeland A."/>
            <person name="Lucas S."/>
            <person name="Lapidus A."/>
            <person name="Barry K."/>
            <person name="Glavina del Rio T."/>
            <person name="Dalin E."/>
            <person name="Tice H."/>
            <person name="Pitluck S."/>
            <person name="Bruce D."/>
            <person name="Goodwin L."/>
            <person name="Chertkov O."/>
            <person name="Brettin T."/>
            <person name="Detter J.C."/>
            <person name="Han C."/>
            <person name="Kuske C.R."/>
            <person name="Schmutz J."/>
            <person name="Larimer F."/>
            <person name="Land M."/>
            <person name="Hauser L."/>
            <person name="Kyrpides N."/>
            <person name="Kim E."/>
            <person name="McCarthy J.K."/>
            <person name="Richardson P."/>
        </authorList>
    </citation>
    <scope>NUCLEOTIDE SEQUENCE [LARGE SCALE GENOMIC DNA]</scope>
    <source>
        <strain>GB-1</strain>
    </source>
</reference>
<name>G6PI_PSEPG</name>
<evidence type="ECO:0000255" key="1">
    <source>
        <dbReference type="HAMAP-Rule" id="MF_00473"/>
    </source>
</evidence>
<gene>
    <name evidence="1" type="primary">pgi</name>
    <name type="ordered locus">PputGB1_4700</name>
</gene>
<protein>
    <recommendedName>
        <fullName evidence="1">Glucose-6-phosphate isomerase</fullName>
        <shortName evidence="1">GPI</shortName>
        <ecNumber evidence="1">5.3.1.9</ecNumber>
    </recommendedName>
    <alternativeName>
        <fullName evidence="1">Phosphoglucose isomerase</fullName>
        <shortName evidence="1">PGI</shortName>
    </alternativeName>
    <alternativeName>
        <fullName evidence="1">Phosphohexose isomerase</fullName>
        <shortName evidence="1">PHI</shortName>
    </alternativeName>
</protein>
<accession>B0KHW6</accession>
<feature type="chain" id="PRO_1000081245" description="Glucose-6-phosphate isomerase">
    <location>
        <begin position="1"/>
        <end position="554"/>
    </location>
</feature>
<feature type="active site" description="Proton donor" evidence="1">
    <location>
        <position position="359"/>
    </location>
</feature>
<feature type="active site" evidence="1">
    <location>
        <position position="390"/>
    </location>
</feature>
<feature type="active site" evidence="1">
    <location>
        <position position="518"/>
    </location>
</feature>
<comment type="function">
    <text evidence="1">Catalyzes the reversible isomerization of glucose-6-phosphate to fructose-6-phosphate.</text>
</comment>
<comment type="catalytic activity">
    <reaction evidence="1">
        <text>alpha-D-glucose 6-phosphate = beta-D-fructose 6-phosphate</text>
        <dbReference type="Rhea" id="RHEA:11816"/>
        <dbReference type="ChEBI" id="CHEBI:57634"/>
        <dbReference type="ChEBI" id="CHEBI:58225"/>
        <dbReference type="EC" id="5.3.1.9"/>
    </reaction>
</comment>
<comment type="pathway">
    <text evidence="1">Carbohydrate biosynthesis; gluconeogenesis.</text>
</comment>
<comment type="pathway">
    <text evidence="1">Carbohydrate degradation; glycolysis; D-glyceraldehyde 3-phosphate and glycerone phosphate from D-glucose: step 2/4.</text>
</comment>
<comment type="subcellular location">
    <subcellularLocation>
        <location evidence="1">Cytoplasm</location>
    </subcellularLocation>
</comment>
<comment type="similarity">
    <text evidence="1">Belongs to the GPI family.</text>
</comment>
<dbReference type="EC" id="5.3.1.9" evidence="1"/>
<dbReference type="EMBL" id="CP000926">
    <property type="protein sequence ID" value="ABZ00587.1"/>
    <property type="molecule type" value="Genomic_DNA"/>
</dbReference>
<dbReference type="RefSeq" id="WP_012274232.1">
    <property type="nucleotide sequence ID" value="NC_010322.1"/>
</dbReference>
<dbReference type="SMR" id="B0KHW6"/>
<dbReference type="KEGG" id="ppg:PputGB1_4700"/>
<dbReference type="eggNOG" id="COG0166">
    <property type="taxonomic scope" value="Bacteria"/>
</dbReference>
<dbReference type="HOGENOM" id="CLU_017947_3_1_6"/>
<dbReference type="UniPathway" id="UPA00109">
    <property type="reaction ID" value="UER00181"/>
</dbReference>
<dbReference type="UniPathway" id="UPA00138"/>
<dbReference type="Proteomes" id="UP000002157">
    <property type="component" value="Chromosome"/>
</dbReference>
<dbReference type="GO" id="GO:0005829">
    <property type="term" value="C:cytosol"/>
    <property type="evidence" value="ECO:0007669"/>
    <property type="project" value="TreeGrafter"/>
</dbReference>
<dbReference type="GO" id="GO:0097367">
    <property type="term" value="F:carbohydrate derivative binding"/>
    <property type="evidence" value="ECO:0007669"/>
    <property type="project" value="InterPro"/>
</dbReference>
<dbReference type="GO" id="GO:0004347">
    <property type="term" value="F:glucose-6-phosphate isomerase activity"/>
    <property type="evidence" value="ECO:0007669"/>
    <property type="project" value="UniProtKB-UniRule"/>
</dbReference>
<dbReference type="GO" id="GO:0048029">
    <property type="term" value="F:monosaccharide binding"/>
    <property type="evidence" value="ECO:0007669"/>
    <property type="project" value="TreeGrafter"/>
</dbReference>
<dbReference type="GO" id="GO:0006094">
    <property type="term" value="P:gluconeogenesis"/>
    <property type="evidence" value="ECO:0007669"/>
    <property type="project" value="UniProtKB-UniRule"/>
</dbReference>
<dbReference type="GO" id="GO:0051156">
    <property type="term" value="P:glucose 6-phosphate metabolic process"/>
    <property type="evidence" value="ECO:0007669"/>
    <property type="project" value="TreeGrafter"/>
</dbReference>
<dbReference type="GO" id="GO:0006096">
    <property type="term" value="P:glycolytic process"/>
    <property type="evidence" value="ECO:0007669"/>
    <property type="project" value="UniProtKB-UniRule"/>
</dbReference>
<dbReference type="CDD" id="cd05015">
    <property type="entry name" value="SIS_PGI_1"/>
    <property type="match status" value="1"/>
</dbReference>
<dbReference type="CDD" id="cd05016">
    <property type="entry name" value="SIS_PGI_2"/>
    <property type="match status" value="1"/>
</dbReference>
<dbReference type="FunFam" id="3.40.50.10490:FF:000018">
    <property type="entry name" value="Glucose-6-phosphate isomerase"/>
    <property type="match status" value="1"/>
</dbReference>
<dbReference type="Gene3D" id="1.10.1390.10">
    <property type="match status" value="1"/>
</dbReference>
<dbReference type="Gene3D" id="3.40.50.10490">
    <property type="entry name" value="Glucose-6-phosphate isomerase like protein, domain 1"/>
    <property type="match status" value="2"/>
</dbReference>
<dbReference type="HAMAP" id="MF_00473">
    <property type="entry name" value="G6P_isomerase"/>
    <property type="match status" value="1"/>
</dbReference>
<dbReference type="InterPro" id="IPR001672">
    <property type="entry name" value="G6P_Isomerase"/>
</dbReference>
<dbReference type="InterPro" id="IPR023096">
    <property type="entry name" value="G6P_Isomerase_C"/>
</dbReference>
<dbReference type="InterPro" id="IPR018189">
    <property type="entry name" value="Phosphoglucose_isomerase_CS"/>
</dbReference>
<dbReference type="InterPro" id="IPR046348">
    <property type="entry name" value="SIS_dom_sf"/>
</dbReference>
<dbReference type="InterPro" id="IPR035476">
    <property type="entry name" value="SIS_PGI_1"/>
</dbReference>
<dbReference type="InterPro" id="IPR035482">
    <property type="entry name" value="SIS_PGI_2"/>
</dbReference>
<dbReference type="NCBIfam" id="NF001211">
    <property type="entry name" value="PRK00179.1"/>
    <property type="match status" value="1"/>
</dbReference>
<dbReference type="PANTHER" id="PTHR11469">
    <property type="entry name" value="GLUCOSE-6-PHOSPHATE ISOMERASE"/>
    <property type="match status" value="1"/>
</dbReference>
<dbReference type="PANTHER" id="PTHR11469:SF1">
    <property type="entry name" value="GLUCOSE-6-PHOSPHATE ISOMERASE"/>
    <property type="match status" value="1"/>
</dbReference>
<dbReference type="Pfam" id="PF00342">
    <property type="entry name" value="PGI"/>
    <property type="match status" value="1"/>
</dbReference>
<dbReference type="PRINTS" id="PR00662">
    <property type="entry name" value="G6PISOMERASE"/>
</dbReference>
<dbReference type="SUPFAM" id="SSF53697">
    <property type="entry name" value="SIS domain"/>
    <property type="match status" value="1"/>
</dbReference>
<dbReference type="PROSITE" id="PS00765">
    <property type="entry name" value="P_GLUCOSE_ISOMERASE_1"/>
    <property type="match status" value="1"/>
</dbReference>
<dbReference type="PROSITE" id="PS00174">
    <property type="entry name" value="P_GLUCOSE_ISOMERASE_2"/>
    <property type="match status" value="1"/>
</dbReference>
<dbReference type="PROSITE" id="PS51463">
    <property type="entry name" value="P_GLUCOSE_ISOMERASE_3"/>
    <property type="match status" value="1"/>
</dbReference>